<evidence type="ECO:0000250" key="1"/>
<evidence type="ECO:0000269" key="2">
    <source>
    </source>
</evidence>
<evidence type="ECO:0000269" key="3">
    <source>
    </source>
</evidence>
<evidence type="ECO:0000269" key="4">
    <source>
    </source>
</evidence>
<evidence type="ECO:0000269" key="5">
    <source>
    </source>
</evidence>
<evidence type="ECO:0000269" key="6">
    <source>
    </source>
</evidence>
<evidence type="ECO:0000269" key="7">
    <source>
    </source>
</evidence>
<evidence type="ECO:0000305" key="8"/>
<organism>
    <name type="scientific">Mus musculus</name>
    <name type="common">Mouse</name>
    <dbReference type="NCBI Taxonomy" id="10090"/>
    <lineage>
        <taxon>Eukaryota</taxon>
        <taxon>Metazoa</taxon>
        <taxon>Chordata</taxon>
        <taxon>Craniata</taxon>
        <taxon>Vertebrata</taxon>
        <taxon>Euteleostomi</taxon>
        <taxon>Mammalia</taxon>
        <taxon>Eutheria</taxon>
        <taxon>Euarchontoglires</taxon>
        <taxon>Glires</taxon>
        <taxon>Rodentia</taxon>
        <taxon>Myomorpha</taxon>
        <taxon>Muroidea</taxon>
        <taxon>Muridae</taxon>
        <taxon>Murinae</taxon>
        <taxon>Mus</taxon>
        <taxon>Mus</taxon>
    </lineage>
</organism>
<gene>
    <name type="primary">Serpina3g</name>
    <name type="synonym">Spi2A</name>
</gene>
<dbReference type="EMBL" id="AY862185">
    <property type="protein sequence ID" value="AAW56612.1"/>
    <property type="molecule type" value="mRNA"/>
</dbReference>
<dbReference type="EMBL" id="BC057144">
    <property type="protein sequence ID" value="AAH57144.1"/>
    <property type="molecule type" value="mRNA"/>
</dbReference>
<dbReference type="RefSeq" id="NP_033277.1">
    <property type="nucleotide sequence ID" value="NM_009251.1"/>
</dbReference>
<dbReference type="SMR" id="Q5I2A0"/>
<dbReference type="FunCoup" id="Q5I2A0">
    <property type="interactions" value="347"/>
</dbReference>
<dbReference type="IntAct" id="Q5I2A0">
    <property type="interactions" value="2"/>
</dbReference>
<dbReference type="MINT" id="Q5I2A0"/>
<dbReference type="MEROPS" id="I04.959"/>
<dbReference type="GlyGen" id="Q5I2A0">
    <property type="glycosylation" value="1 site, 1 N-linked glycan (1 site)"/>
</dbReference>
<dbReference type="iPTMnet" id="Q5I2A0"/>
<dbReference type="PhosphoSitePlus" id="Q5I2A0"/>
<dbReference type="SwissPalm" id="Q5I2A0"/>
<dbReference type="CPTAC" id="non-CPTAC-3747"/>
<dbReference type="jPOST" id="Q5I2A0"/>
<dbReference type="PaxDb" id="10090-ENSMUSP00000041250"/>
<dbReference type="PeptideAtlas" id="Q5I2A0"/>
<dbReference type="ProteomicsDB" id="257296"/>
<dbReference type="Pumba" id="Q5I2A0"/>
<dbReference type="DNASU" id="20715"/>
<dbReference type="GeneID" id="20715"/>
<dbReference type="KEGG" id="mmu:20715"/>
<dbReference type="UCSC" id="uc007oxa.2">
    <property type="organism name" value="mouse"/>
</dbReference>
<dbReference type="AGR" id="MGI:105046"/>
<dbReference type="CTD" id="20715"/>
<dbReference type="MGI" id="MGI:105046">
    <property type="gene designation" value="Serpina3g"/>
</dbReference>
<dbReference type="eggNOG" id="KOG2392">
    <property type="taxonomic scope" value="Eukaryota"/>
</dbReference>
<dbReference type="InParanoid" id="Q5I2A0"/>
<dbReference type="PhylomeDB" id="Q5I2A0"/>
<dbReference type="BioGRID-ORCS" id="20715">
    <property type="hits" value="0 hits in 54 CRISPR screens"/>
</dbReference>
<dbReference type="ChiTaRS" id="Serpina3g">
    <property type="organism name" value="mouse"/>
</dbReference>
<dbReference type="PRO" id="PR:Q5I2A0"/>
<dbReference type="Proteomes" id="UP000000589">
    <property type="component" value="Unplaced"/>
</dbReference>
<dbReference type="RNAct" id="Q5I2A0">
    <property type="molecule type" value="protein"/>
</dbReference>
<dbReference type="GO" id="GO:0005737">
    <property type="term" value="C:cytoplasm"/>
    <property type="evidence" value="ECO:0007669"/>
    <property type="project" value="UniProtKB-SubCell"/>
</dbReference>
<dbReference type="GO" id="GO:0005615">
    <property type="term" value="C:extracellular space"/>
    <property type="evidence" value="ECO:0007669"/>
    <property type="project" value="InterPro"/>
</dbReference>
<dbReference type="GO" id="GO:0005634">
    <property type="term" value="C:nucleus"/>
    <property type="evidence" value="ECO:0007669"/>
    <property type="project" value="UniProtKB-SubCell"/>
</dbReference>
<dbReference type="GO" id="GO:0004869">
    <property type="term" value="F:cysteine-type endopeptidase inhibitor activity"/>
    <property type="evidence" value="ECO:0007669"/>
    <property type="project" value="UniProtKB-KW"/>
</dbReference>
<dbReference type="GO" id="GO:0004867">
    <property type="term" value="F:serine-type endopeptidase inhibitor activity"/>
    <property type="evidence" value="ECO:0007669"/>
    <property type="project" value="UniProtKB-KW"/>
</dbReference>
<dbReference type="GO" id="GO:0002250">
    <property type="term" value="P:adaptive immune response"/>
    <property type="evidence" value="ECO:0007669"/>
    <property type="project" value="UniProtKB-KW"/>
</dbReference>
<dbReference type="GO" id="GO:0006915">
    <property type="term" value="P:apoptotic process"/>
    <property type="evidence" value="ECO:0007669"/>
    <property type="project" value="UniProtKB-KW"/>
</dbReference>
<dbReference type="GO" id="GO:0034097">
    <property type="term" value="P:response to cytokine"/>
    <property type="evidence" value="ECO:0000314"/>
    <property type="project" value="MGI"/>
</dbReference>
<dbReference type="GO" id="GO:0043434">
    <property type="term" value="P:response to peptide hormone"/>
    <property type="evidence" value="ECO:0000314"/>
    <property type="project" value="MGI"/>
</dbReference>
<dbReference type="CDD" id="cd19551">
    <property type="entry name" value="serpinA3_A1AC"/>
    <property type="match status" value="1"/>
</dbReference>
<dbReference type="FunFam" id="3.30.497.10:FF:000001">
    <property type="entry name" value="Serine protease inhibitor"/>
    <property type="match status" value="1"/>
</dbReference>
<dbReference type="FunFam" id="2.30.39.10:FF:000002">
    <property type="entry name" value="Serpin family D member 1"/>
    <property type="match status" value="1"/>
</dbReference>
<dbReference type="Gene3D" id="2.30.39.10">
    <property type="entry name" value="Alpha-1-antitrypsin, domain 1"/>
    <property type="match status" value="1"/>
</dbReference>
<dbReference type="Gene3D" id="3.30.497.10">
    <property type="entry name" value="Antithrombin, subunit I, domain 2"/>
    <property type="match status" value="1"/>
</dbReference>
<dbReference type="InterPro" id="IPR023795">
    <property type="entry name" value="Serpin_CS"/>
</dbReference>
<dbReference type="InterPro" id="IPR023796">
    <property type="entry name" value="Serpin_dom"/>
</dbReference>
<dbReference type="InterPro" id="IPR000215">
    <property type="entry name" value="Serpin_fam"/>
</dbReference>
<dbReference type="InterPro" id="IPR036186">
    <property type="entry name" value="Serpin_sf"/>
</dbReference>
<dbReference type="InterPro" id="IPR042178">
    <property type="entry name" value="Serpin_sf_1"/>
</dbReference>
<dbReference type="InterPro" id="IPR042185">
    <property type="entry name" value="Serpin_sf_2"/>
</dbReference>
<dbReference type="PANTHER" id="PTHR11461:SF145">
    <property type="entry name" value="ALPHA-1-ANTICHYMOTRYPSIN"/>
    <property type="match status" value="1"/>
</dbReference>
<dbReference type="PANTHER" id="PTHR11461">
    <property type="entry name" value="SERINE PROTEASE INHIBITOR, SERPIN"/>
    <property type="match status" value="1"/>
</dbReference>
<dbReference type="Pfam" id="PF00079">
    <property type="entry name" value="Serpin"/>
    <property type="match status" value="1"/>
</dbReference>
<dbReference type="SMART" id="SM00093">
    <property type="entry name" value="SERPIN"/>
    <property type="match status" value="1"/>
</dbReference>
<dbReference type="SUPFAM" id="SSF56574">
    <property type="entry name" value="Serpins"/>
    <property type="match status" value="1"/>
</dbReference>
<dbReference type="PROSITE" id="PS00284">
    <property type="entry name" value="SERPIN"/>
    <property type="match status" value="1"/>
</dbReference>
<proteinExistence type="evidence at protein level"/>
<reference key="1">
    <citation type="submission" date="2004-12" db="EMBL/GenBank/DDBJ databases">
        <authorList>
            <person name="Liu N."/>
            <person name="Ashton-Rickardt P.G."/>
            <person name="Xia G."/>
        </authorList>
    </citation>
    <scope>NUCLEOTIDE SEQUENCE [MRNA]</scope>
    <source>
        <strain>C57BL/6J</strain>
    </source>
</reference>
<reference key="2">
    <citation type="journal article" date="2004" name="Genome Res.">
        <title>The status, quality, and expansion of the NIH full-length cDNA project: the Mammalian Gene Collection (MGC).</title>
        <authorList>
            <consortium name="The MGC Project Team"/>
        </authorList>
    </citation>
    <scope>NUCLEOTIDE SEQUENCE [LARGE SCALE MRNA] OF 91-440</scope>
    <source>
        <strain>FVB/N</strain>
        <tissue>Mammary gland</tissue>
    </source>
</reference>
<reference key="3">
    <citation type="journal article" date="1997" name="Blood">
        <title>Identification of a serpin specifically expressed in multipotent and bipotent hematopoietic progenitor cells and in activated T cells.</title>
        <authorList>
            <person name="Hampson I.N."/>
            <person name="Hampson L."/>
            <person name="Pinkoski M."/>
            <person name="Cross M."/>
            <person name="Heyworth C.M."/>
            <person name="Bleackley R.C."/>
            <person name="Atkinson E."/>
            <person name="Dexter T.M."/>
        </authorList>
    </citation>
    <scope>TISSUE SPECIFICITY</scope>
</reference>
<reference key="4">
    <citation type="journal article" date="2001" name="Proc. Natl. Acad. Sci. U.S.A.">
        <title>From hematopoiesis to neuropoiesis: evidence of overlapping genetic programs.</title>
        <authorList>
            <person name="Terskikh A.V."/>
            <person name="Easterday M.C."/>
            <person name="Li L."/>
            <person name="Hood L."/>
            <person name="Kornblum H.I."/>
            <person name="Geschwind D.H."/>
            <person name="Weissman I.L."/>
        </authorList>
    </citation>
    <scope>TISSUE SPECIFICITY</scope>
</reference>
<reference key="5">
    <citation type="journal article" date="2003" name="Biochem. J.">
        <title>Murine serpin 2A is a redox-sensitive intracellular protein.</title>
        <authorList>
            <person name="Morris E.C."/>
            <person name="Dafforn T.R."/>
            <person name="Forsyth S.L."/>
            <person name="Missen M.A."/>
            <person name="Horvath A.J."/>
            <person name="Hampson L."/>
            <person name="Hampson I.N."/>
            <person name="Currie G."/>
            <person name="Carrell R.W."/>
            <person name="Coughlin P.B."/>
        </authorList>
    </citation>
    <scope>SUBCELLULAR LOCATION</scope>
</reference>
<reference key="6">
    <citation type="journal article" date="2003" name="EMBO J.">
        <title>NF-kappaB protects from the lysosomal pathway of cell death.</title>
        <authorList>
            <person name="Liu N."/>
            <person name="Raja S.M."/>
            <person name="Zazzeroni F."/>
            <person name="Metkar S.S."/>
            <person name="Shah R."/>
            <person name="Zhang M."/>
            <person name="Wang Y."/>
            <person name="Broemme D."/>
            <person name="Russin W.A."/>
            <person name="Lee J.C."/>
            <person name="Peter M.E."/>
            <person name="Froelich C.J."/>
            <person name="Franzoso G."/>
            <person name="Ashton-Rickardt P.G."/>
        </authorList>
    </citation>
    <scope>FUNCTION</scope>
    <scope>SUBCELLULAR LOCATION</scope>
    <scope>INDUCTION</scope>
    <source>
        <strain>C57BL/6J</strain>
    </source>
</reference>
<reference key="7">
    <citation type="journal article" date="2003" name="Genomics">
        <title>A review and comparison of the murine alpha1-antitrypsin and alpha1-antichymotrypsin multigene clusters with the human clade A serpins.</title>
        <authorList>
            <person name="Forsyth S."/>
            <person name="Horvath A."/>
            <person name="Coughlin P."/>
        </authorList>
    </citation>
    <scope>GENE FAMILY</scope>
    <scope>NOMENCLATURE</scope>
</reference>
<reference key="8">
    <citation type="journal article" date="2004" name="FEBS Lett.">
        <title>Serine protease inhibitor 2A inhibits caspase-independent cell death.</title>
        <authorList>
            <person name="Liu N."/>
            <person name="Wang Y."/>
            <person name="Ashton-Rickardt P.G."/>
        </authorList>
    </citation>
    <scope>FUNCTION</scope>
    <source>
        <strain>C57BL/6J</strain>
    </source>
</reference>
<reference key="9">
    <citation type="journal article" date="2004" name="J. Mol. Evol.">
        <title>Expression patterns of murine antichymotrypsin-like genes reflect evolutionary divergence at the Serpina3 locus.</title>
        <authorList>
            <person name="Horvath A.J."/>
            <person name="Forsyth S.L."/>
            <person name="Coughlin P.B."/>
        </authorList>
    </citation>
    <scope>TISSUE SPECIFICITY</scope>
    <scope>REGION RCL</scope>
</reference>
<reference key="10">
    <citation type="journal article" date="2004" name="Nat. Immunol.">
        <title>Serine protease inhibitor 2A is a protective factor for memory T cell development.</title>
        <authorList>
            <person name="Liu N."/>
            <person name="Phillips T."/>
            <person name="Zhang M."/>
            <person name="Wang Y."/>
            <person name="Opferman J.T."/>
            <person name="Shah R."/>
            <person name="Ashton-Rickardt P.G."/>
        </authorList>
    </citation>
    <scope>FUNCTION</scope>
    <scope>DEVELOPMENTAL STAGE</scope>
    <source>
        <strain>C57BL/6J</strain>
    </source>
</reference>
<reference key="11">
    <citation type="journal article" date="2010" name="Cell">
        <title>A tissue-specific atlas of mouse protein phosphorylation and expression.</title>
        <authorList>
            <person name="Huttlin E.L."/>
            <person name="Jedrychowski M.P."/>
            <person name="Elias J.E."/>
            <person name="Goswami T."/>
            <person name="Rad R."/>
            <person name="Beausoleil S.A."/>
            <person name="Villen J."/>
            <person name="Haas W."/>
            <person name="Sowa M.E."/>
            <person name="Gygi S.P."/>
        </authorList>
    </citation>
    <scope>IDENTIFICATION BY MASS SPECTROMETRY [LARGE SCALE ANALYSIS]</scope>
    <source>
        <tissue>Lung</tissue>
        <tissue>Spleen</tissue>
    </source>
</reference>
<keyword id="KW-1064">Adaptive immunity</keyword>
<keyword id="KW-0053">Apoptosis</keyword>
<keyword id="KW-0963">Cytoplasm</keyword>
<keyword id="KW-0391">Immunity</keyword>
<keyword id="KW-0539">Nucleus</keyword>
<keyword id="KW-0646">Protease inhibitor</keyword>
<keyword id="KW-1185">Reference proteome</keyword>
<keyword id="KW-0722">Serine protease inhibitor</keyword>
<keyword id="KW-0789">Thiol protease inhibitor</keyword>
<comment type="function">
    <text evidence="3 4 5">Serine and cysteine protease inhibitor. Can inhibit lysosomal papain-like proteases including the cathepsins B, G, H, K, L and V. Ineffective against elastase, granzyme A, granzyme B, or caspases 3, 8 or 9. Inhibition of cytoplasmic cathepsin B following release from the lysosome may protect cells from apoptosis. This may facilitate the survival of progenitor T-cells and the subsequent development of long term memory CD8 T-cells.</text>
</comment>
<comment type="subcellular location">
    <subcellularLocation>
        <location>Cytoplasm</location>
    </subcellularLocation>
    <subcellularLocation>
        <location>Nucleus</location>
    </subcellularLocation>
</comment>
<comment type="tissue specificity">
    <text evidence="2 6 7">Expressed in bone marrow (particularly hematopoietic stem cells), heart, kidney, liver, lung, skeletal muscle, spleen, testis, thymus and T-cells.</text>
</comment>
<comment type="developmental stage">
    <text evidence="5">T-cell specific expression rises during the differentiation of CD8 T-cell progenitors into memory CD8 T-cells.</text>
</comment>
<comment type="induction">
    <text evidence="3">Induction during apoptosis requires NF-kappa-B, a heterodimer of RELA- and NFKB1.</text>
</comment>
<comment type="domain">
    <text evidence="1">The reactive center loop (RCL) extends out from the body of the protein and directs binding to the target protease. The protease cleaves the serpin at the reactive site within the RCL, establishing a covalent linkage between the serpin reactive site and the protease. The resulting inactive serpin-protease complex is highly stable (By similarity). Variability within the reactive center loop (RCL) sequences of Serpina3 paralogs may determine target protease specificity.</text>
</comment>
<comment type="miscellaneous">
    <text>The single human alpha1-antichymotrypsin gene (SERPINA3) is represented by a cluster of 14 individual murine paralogs.</text>
</comment>
<comment type="similarity">
    <text evidence="8">Belongs to the serpin family.</text>
</comment>
<accession>Q5I2A0</accession>
<accession>Q6PG99</accession>
<name>SPA3G_MOUSE</name>
<protein>
    <recommendedName>
        <fullName>Serine protease inhibitor A3G</fullName>
        <shortName>Serpin A3G</shortName>
    </recommendedName>
    <alternativeName>
        <fullName>Serine protease inhibitor 2A</fullName>
        <shortName>Serpin 2A</shortName>
    </alternativeName>
</protein>
<sequence>MAGVSPAVFGCPDVTLGRNTAVREVQENVTSVDSLTLVSSNTDFAFSLYRKLVLKNPDENVVFSPFSICTALALLSLGAKSNTLKEILEGLKFNLTETPEPDIHQGFRYLLDLLSQPGNQVQISTGSALFIEKHLQILAEFKEKARALYQAEAFTADFQQPLKATKLINDYVSNHTQGKIKELISGLKESTLMVLVNYIYFKGKWKNPFDPNDTFKSEFYLDEKRSVIVSMMKTGYLTTPYFRDEELSCTVVELKYTGNASAMFILPDQGRMQQVEASLQPETLRKWKNSLKPRMIHELRLPKFSISTDYSLEHILPELGIREVFSTQADLSAITGTKDLRVSQVVHKAVLDVAETGTEAAAATGMAGVGCCAVFDFLEIFFNRPFLMIISDTKAHIALFMAKVTNPERSMNFPNGEGASSQRLESKRLCFGDPLCLIGQ</sequence>
<feature type="chain" id="PRO_0000094098" description="Serine protease inhibitor A3G">
    <location>
        <begin position="1"/>
        <end position="440"/>
    </location>
</feature>
<feature type="region of interest" description="RCL">
    <location>
        <begin position="357"/>
        <end position="382"/>
    </location>
</feature>
<feature type="site" description="Reactive bond" evidence="1">
    <location>
        <begin position="371"/>
        <end position="372"/>
    </location>
</feature>
<feature type="sequence conflict" description="In Ref. 1; AAW56612." evidence="8" ref="1">
    <original>Q</original>
    <variation>H</variation>
    <location>
        <position position="328"/>
    </location>
</feature>
<feature type="sequence conflict" description="In Ref. 1; AAW56612." evidence="8" ref="1">
    <original>T</original>
    <variation>K</variation>
    <location>
        <position position="356"/>
    </location>
</feature>
<feature type="sequence conflict" description="In Ref. 1; AAW56612." evidence="8" ref="1">
    <original>M</original>
    <variation>T</variation>
    <location>
        <position position="411"/>
    </location>
</feature>